<name>BCLA3_HUMAN</name>
<evidence type="ECO:0000250" key="1">
    <source>
        <dbReference type="UniProtKB" id="A2AG58"/>
    </source>
</evidence>
<evidence type="ECO:0000256" key="2">
    <source>
        <dbReference type="SAM" id="MobiDB-lite"/>
    </source>
</evidence>
<evidence type="ECO:0000303" key="3">
    <source>
    </source>
</evidence>
<evidence type="ECO:0000303" key="4">
    <source>
    </source>
</evidence>
<evidence type="ECO:0000305" key="5"/>
<evidence type="ECO:0000312" key="6">
    <source>
        <dbReference type="HGNC" id="HGNC:27413"/>
    </source>
</evidence>
<evidence type="ECO:0007744" key="7">
    <source>
    </source>
</evidence>
<evidence type="ECO:0007744" key="8">
    <source>
    </source>
</evidence>
<evidence type="ECO:0007744" key="9">
    <source>
    </source>
</evidence>
<evidence type="ECO:0007744" key="10">
    <source>
    </source>
</evidence>
<dbReference type="EMBL" id="AL772197">
    <property type="status" value="NOT_ANNOTATED_CDS"/>
    <property type="molecule type" value="Genomic_DNA"/>
</dbReference>
<dbReference type="EMBL" id="AK094661">
    <property type="protein sequence ID" value="BAC04399.1"/>
    <property type="status" value="ALT_INIT"/>
    <property type="molecule type" value="mRNA"/>
</dbReference>
<dbReference type="EMBL" id="AK127709">
    <property type="protein sequence ID" value="BAC87094.1"/>
    <property type="status" value="ALT_INIT"/>
    <property type="molecule type" value="mRNA"/>
</dbReference>
<dbReference type="EMBL" id="BC126172">
    <property type="protein sequence ID" value="AAI26173.1"/>
    <property type="molecule type" value="mRNA"/>
</dbReference>
<dbReference type="CCDS" id="CCDS14194.2">
    <molecule id="A2AJT9-2"/>
</dbReference>
<dbReference type="CCDS" id="CCDS94576.1">
    <molecule id="A2AJT9-1"/>
</dbReference>
<dbReference type="RefSeq" id="NP_001354703.1">
    <molecule id="A2AJT9-1"/>
    <property type="nucleotide sequence ID" value="NM_001367774.2"/>
</dbReference>
<dbReference type="RefSeq" id="NP_938020.2">
    <molecule id="A2AJT9-2"/>
    <property type="nucleotide sequence ID" value="NM_198279.4"/>
</dbReference>
<dbReference type="RefSeq" id="XP_005274530.1">
    <molecule id="A2AJT9-1"/>
    <property type="nucleotide sequence ID" value="XM_005274473.4"/>
</dbReference>
<dbReference type="RefSeq" id="XP_011543777.1">
    <property type="nucleotide sequence ID" value="XM_011545475.2"/>
</dbReference>
<dbReference type="RefSeq" id="XP_011543778.1">
    <molecule id="A2AJT9-1"/>
    <property type="nucleotide sequence ID" value="XM_011545476.3"/>
</dbReference>
<dbReference type="RefSeq" id="XP_011543779.1">
    <molecule id="A2AJT9-2"/>
    <property type="nucleotide sequence ID" value="XM_011545477.3"/>
</dbReference>
<dbReference type="RefSeq" id="XP_047297918.1">
    <molecule id="A2AJT9-1"/>
    <property type="nucleotide sequence ID" value="XM_047441962.1"/>
</dbReference>
<dbReference type="RefSeq" id="XP_047297919.1">
    <molecule id="A2AJT9-1"/>
    <property type="nucleotide sequence ID" value="XM_047441963.1"/>
</dbReference>
<dbReference type="RefSeq" id="XP_047297920.1">
    <molecule id="A2AJT9-1"/>
    <property type="nucleotide sequence ID" value="XM_047441964.1"/>
</dbReference>
<dbReference type="RefSeq" id="XP_047297923.1">
    <molecule id="A2AJT9-2"/>
    <property type="nucleotide sequence ID" value="XM_047441967.1"/>
</dbReference>
<dbReference type="RefSeq" id="XP_047297924.1">
    <molecule id="A2AJT9-2"/>
    <property type="nucleotide sequence ID" value="XM_047441968.1"/>
</dbReference>
<dbReference type="RefSeq" id="XP_047297925.1">
    <molecule id="A2AJT9-2"/>
    <property type="nucleotide sequence ID" value="XM_047441969.1"/>
</dbReference>
<dbReference type="RefSeq" id="XP_047297926.1">
    <molecule id="A2AJT9-2"/>
    <property type="nucleotide sequence ID" value="XM_047441970.1"/>
</dbReference>
<dbReference type="RefSeq" id="XP_054182743.1">
    <molecule id="A2AJT9-1"/>
    <property type="nucleotide sequence ID" value="XM_054326768.1"/>
</dbReference>
<dbReference type="RefSeq" id="XP_054182744.1">
    <molecule id="A2AJT9-1"/>
    <property type="nucleotide sequence ID" value="XM_054326769.1"/>
</dbReference>
<dbReference type="RefSeq" id="XP_054182745.1">
    <molecule id="A2AJT9-1"/>
    <property type="nucleotide sequence ID" value="XM_054326770.1"/>
</dbReference>
<dbReference type="RefSeq" id="XP_054182746.1">
    <molecule id="A2AJT9-1"/>
    <property type="nucleotide sequence ID" value="XM_054326771.1"/>
</dbReference>
<dbReference type="RefSeq" id="XP_054182747.1">
    <molecule id="A2AJT9-1"/>
    <property type="nucleotide sequence ID" value="XM_054326772.1"/>
</dbReference>
<dbReference type="RefSeq" id="XP_054182750.1">
    <molecule id="A2AJT9-2"/>
    <property type="nucleotide sequence ID" value="XM_054326775.1"/>
</dbReference>
<dbReference type="RefSeq" id="XP_054182751.1">
    <molecule id="A2AJT9-2"/>
    <property type="nucleotide sequence ID" value="XM_054326776.1"/>
</dbReference>
<dbReference type="RefSeq" id="XP_054182752.1">
    <molecule id="A2AJT9-2"/>
    <property type="nucleotide sequence ID" value="XM_054326777.1"/>
</dbReference>
<dbReference type="RefSeq" id="XP_054182753.1">
    <molecule id="A2AJT9-2"/>
    <property type="nucleotide sequence ID" value="XM_054326778.1"/>
</dbReference>
<dbReference type="RefSeq" id="XP_054182754.1">
    <molecule id="A2AJT9-2"/>
    <property type="nucleotide sequence ID" value="XM_054326779.1"/>
</dbReference>
<dbReference type="BioGRID" id="129173">
    <property type="interactions" value="3"/>
</dbReference>
<dbReference type="FunCoup" id="A2AJT9">
    <property type="interactions" value="150"/>
</dbReference>
<dbReference type="IntAct" id="A2AJT9">
    <property type="interactions" value="4"/>
</dbReference>
<dbReference type="STRING" id="9606.ENSP00000369009"/>
<dbReference type="iPTMnet" id="A2AJT9"/>
<dbReference type="PhosphoSitePlus" id="A2AJT9"/>
<dbReference type="BioMuta" id="BCLAF3"/>
<dbReference type="jPOST" id="A2AJT9"/>
<dbReference type="MassIVE" id="A2AJT9"/>
<dbReference type="PaxDb" id="9606-ENSP00000369009"/>
<dbReference type="PeptideAtlas" id="A2AJT9"/>
<dbReference type="ProteomicsDB" id="405">
    <molecule id="A2AJT9-1"/>
</dbReference>
<dbReference type="ProteomicsDB" id="406">
    <molecule id="A2AJT9-2"/>
</dbReference>
<dbReference type="ProteomicsDB" id="407">
    <molecule id="A2AJT9-3"/>
</dbReference>
<dbReference type="Antibodypedia" id="9758">
    <property type="antibodies" value="29 antibodies from 10 providers"/>
</dbReference>
<dbReference type="DNASU" id="256643"/>
<dbReference type="Ensembl" id="ENST00000379682.9">
    <molecule id="A2AJT9-1"/>
    <property type="protein sequence ID" value="ENSP00000369004.4"/>
    <property type="gene ID" value="ENSG00000173681.17"/>
</dbReference>
<dbReference type="Ensembl" id="ENST00000379687.8">
    <molecule id="A2AJT9-2"/>
    <property type="protein sequence ID" value="ENSP00000369009.3"/>
    <property type="gene ID" value="ENSG00000173681.17"/>
</dbReference>
<dbReference type="GeneID" id="256643"/>
<dbReference type="KEGG" id="hsa:256643"/>
<dbReference type="MANE-Select" id="ENST00000379682.9">
    <property type="protein sequence ID" value="ENSP00000369004.4"/>
    <property type="RefSeq nucleotide sequence ID" value="NM_001367774.2"/>
    <property type="RefSeq protein sequence ID" value="NP_001354703.1"/>
</dbReference>
<dbReference type="UCSC" id="uc004czp.4">
    <molecule id="A2AJT9-1"/>
    <property type="organism name" value="human"/>
</dbReference>
<dbReference type="AGR" id="HGNC:27413"/>
<dbReference type="CTD" id="256643"/>
<dbReference type="DisGeNET" id="256643"/>
<dbReference type="GeneCards" id="BCLAF3"/>
<dbReference type="HGNC" id="HGNC:27413">
    <property type="gene designation" value="BCLAF3"/>
</dbReference>
<dbReference type="HPA" id="ENSG00000173681">
    <property type="expression patterns" value="Low tissue specificity"/>
</dbReference>
<dbReference type="neXtProt" id="NX_A2AJT9"/>
<dbReference type="OpenTargets" id="ENSG00000173681"/>
<dbReference type="PharmGKB" id="PA134885371"/>
<dbReference type="VEuPathDB" id="HostDB:ENSG00000173681"/>
<dbReference type="eggNOG" id="ENOG502S4TN">
    <property type="taxonomic scope" value="Eukaryota"/>
</dbReference>
<dbReference type="GeneTree" id="ENSGT00950000183163"/>
<dbReference type="HOGENOM" id="CLU_024256_0_0_1"/>
<dbReference type="InParanoid" id="A2AJT9"/>
<dbReference type="OMA" id="KWHEDEF"/>
<dbReference type="OrthoDB" id="9935637at2759"/>
<dbReference type="PAN-GO" id="A2AJT9">
    <property type="GO annotations" value="4 GO annotations based on evolutionary models"/>
</dbReference>
<dbReference type="PhylomeDB" id="A2AJT9"/>
<dbReference type="TreeFam" id="TF335939"/>
<dbReference type="PathwayCommons" id="A2AJT9"/>
<dbReference type="SignaLink" id="A2AJT9"/>
<dbReference type="BioGRID-ORCS" id="256643">
    <property type="hits" value="12 hits in 767 CRISPR screens"/>
</dbReference>
<dbReference type="ChiTaRS" id="CXorf23">
    <property type="organism name" value="human"/>
</dbReference>
<dbReference type="GenomeRNAi" id="256643"/>
<dbReference type="Pharos" id="A2AJT9">
    <property type="development level" value="Tdark"/>
</dbReference>
<dbReference type="PRO" id="PR:A2AJT9"/>
<dbReference type="Proteomes" id="UP000005640">
    <property type="component" value="Chromosome X"/>
</dbReference>
<dbReference type="RNAct" id="A2AJT9">
    <property type="molecule type" value="protein"/>
</dbReference>
<dbReference type="Bgee" id="ENSG00000173681">
    <property type="expression patterns" value="Expressed in secondary oocyte and 125 other cell types or tissues"/>
</dbReference>
<dbReference type="ExpressionAtlas" id="A2AJT9">
    <property type="expression patterns" value="baseline and differential"/>
</dbReference>
<dbReference type="GO" id="GO:0016592">
    <property type="term" value="C:mediator complex"/>
    <property type="evidence" value="ECO:0000318"/>
    <property type="project" value="GO_Central"/>
</dbReference>
<dbReference type="GO" id="GO:0005739">
    <property type="term" value="C:mitochondrion"/>
    <property type="evidence" value="ECO:0007669"/>
    <property type="project" value="UniProtKB-SubCell"/>
</dbReference>
<dbReference type="GO" id="GO:0003677">
    <property type="term" value="F:DNA binding"/>
    <property type="evidence" value="ECO:0000318"/>
    <property type="project" value="GO_Central"/>
</dbReference>
<dbReference type="GO" id="GO:0003712">
    <property type="term" value="F:transcription coregulator activity"/>
    <property type="evidence" value="ECO:0000318"/>
    <property type="project" value="GO_Central"/>
</dbReference>
<dbReference type="GO" id="GO:0045944">
    <property type="term" value="P:positive regulation of transcription by RNA polymerase II"/>
    <property type="evidence" value="ECO:0000318"/>
    <property type="project" value="GO_Central"/>
</dbReference>
<dbReference type="InterPro" id="IPR029199">
    <property type="entry name" value="THRAP3_BCLAF1"/>
</dbReference>
<dbReference type="PANTHER" id="PTHR15268:SF17">
    <property type="entry name" value="BCLAF1 AND THRAP3 FAMILY MEMBER 3"/>
    <property type="match status" value="1"/>
</dbReference>
<dbReference type="PANTHER" id="PTHR15268">
    <property type="entry name" value="THRAP3/BCLAF1"/>
    <property type="match status" value="1"/>
</dbReference>
<dbReference type="Pfam" id="PF15440">
    <property type="entry name" value="THRAP3_BCLAF1"/>
    <property type="match status" value="1"/>
</dbReference>
<gene>
    <name evidence="6" type="primary">BCLAF3</name>
    <name evidence="6" type="synonym">CXorf23</name>
</gene>
<proteinExistence type="evidence at protein level"/>
<keyword id="KW-0025">Alternative splicing</keyword>
<keyword id="KW-1017">Isopeptide bond</keyword>
<keyword id="KW-0496">Mitochondrion</keyword>
<keyword id="KW-0597">Phosphoprotein</keyword>
<keyword id="KW-1267">Proteomics identification</keyword>
<keyword id="KW-1185">Reference proteome</keyword>
<keyword id="KW-0832">Ubl conjugation</keyword>
<accession>A2AJT9</accession>
<accession>A1A4E8</accession>
<accession>Q5VSM7</accession>
<accession>Q5VSN1</accession>
<accession>Q6ZS60</accession>
<accession>Q8N1W7</accession>
<reference key="1">
    <citation type="journal article" date="2005" name="Nature">
        <title>The DNA sequence of the human X chromosome.</title>
        <authorList>
            <person name="Ross M.T."/>
            <person name="Grafham D.V."/>
            <person name="Coffey A.J."/>
            <person name="Scherer S."/>
            <person name="McLay K."/>
            <person name="Muzny D."/>
            <person name="Platzer M."/>
            <person name="Howell G.R."/>
            <person name="Burrows C."/>
            <person name="Bird C.P."/>
            <person name="Frankish A."/>
            <person name="Lovell F.L."/>
            <person name="Howe K.L."/>
            <person name="Ashurst J.L."/>
            <person name="Fulton R.S."/>
            <person name="Sudbrak R."/>
            <person name="Wen G."/>
            <person name="Jones M.C."/>
            <person name="Hurles M.E."/>
            <person name="Andrews T.D."/>
            <person name="Scott C.E."/>
            <person name="Searle S."/>
            <person name="Ramser J."/>
            <person name="Whittaker A."/>
            <person name="Deadman R."/>
            <person name="Carter N.P."/>
            <person name="Hunt S.E."/>
            <person name="Chen R."/>
            <person name="Cree A."/>
            <person name="Gunaratne P."/>
            <person name="Havlak P."/>
            <person name="Hodgson A."/>
            <person name="Metzker M.L."/>
            <person name="Richards S."/>
            <person name="Scott G."/>
            <person name="Steffen D."/>
            <person name="Sodergren E."/>
            <person name="Wheeler D.A."/>
            <person name="Worley K.C."/>
            <person name="Ainscough R."/>
            <person name="Ambrose K.D."/>
            <person name="Ansari-Lari M.A."/>
            <person name="Aradhya S."/>
            <person name="Ashwell R.I."/>
            <person name="Babbage A.K."/>
            <person name="Bagguley C.L."/>
            <person name="Ballabio A."/>
            <person name="Banerjee R."/>
            <person name="Barker G.E."/>
            <person name="Barlow K.F."/>
            <person name="Barrett I.P."/>
            <person name="Bates K.N."/>
            <person name="Beare D.M."/>
            <person name="Beasley H."/>
            <person name="Beasley O."/>
            <person name="Beck A."/>
            <person name="Bethel G."/>
            <person name="Blechschmidt K."/>
            <person name="Brady N."/>
            <person name="Bray-Allen S."/>
            <person name="Bridgeman A.M."/>
            <person name="Brown A.J."/>
            <person name="Brown M.J."/>
            <person name="Bonnin D."/>
            <person name="Bruford E.A."/>
            <person name="Buhay C."/>
            <person name="Burch P."/>
            <person name="Burford D."/>
            <person name="Burgess J."/>
            <person name="Burrill W."/>
            <person name="Burton J."/>
            <person name="Bye J.M."/>
            <person name="Carder C."/>
            <person name="Carrel L."/>
            <person name="Chako J."/>
            <person name="Chapman J.C."/>
            <person name="Chavez D."/>
            <person name="Chen E."/>
            <person name="Chen G."/>
            <person name="Chen Y."/>
            <person name="Chen Z."/>
            <person name="Chinault C."/>
            <person name="Ciccodicola A."/>
            <person name="Clark S.Y."/>
            <person name="Clarke G."/>
            <person name="Clee C.M."/>
            <person name="Clegg S."/>
            <person name="Clerc-Blankenburg K."/>
            <person name="Clifford K."/>
            <person name="Cobley V."/>
            <person name="Cole C.G."/>
            <person name="Conquer J.S."/>
            <person name="Corby N."/>
            <person name="Connor R.E."/>
            <person name="David R."/>
            <person name="Davies J."/>
            <person name="Davis C."/>
            <person name="Davis J."/>
            <person name="Delgado O."/>
            <person name="Deshazo D."/>
            <person name="Dhami P."/>
            <person name="Ding Y."/>
            <person name="Dinh H."/>
            <person name="Dodsworth S."/>
            <person name="Draper H."/>
            <person name="Dugan-Rocha S."/>
            <person name="Dunham A."/>
            <person name="Dunn M."/>
            <person name="Durbin K.J."/>
            <person name="Dutta I."/>
            <person name="Eades T."/>
            <person name="Ellwood M."/>
            <person name="Emery-Cohen A."/>
            <person name="Errington H."/>
            <person name="Evans K.L."/>
            <person name="Faulkner L."/>
            <person name="Francis F."/>
            <person name="Frankland J."/>
            <person name="Fraser A.E."/>
            <person name="Galgoczy P."/>
            <person name="Gilbert J."/>
            <person name="Gill R."/>
            <person name="Gloeckner G."/>
            <person name="Gregory S.G."/>
            <person name="Gribble S."/>
            <person name="Griffiths C."/>
            <person name="Grocock R."/>
            <person name="Gu Y."/>
            <person name="Gwilliam R."/>
            <person name="Hamilton C."/>
            <person name="Hart E.A."/>
            <person name="Hawes A."/>
            <person name="Heath P.D."/>
            <person name="Heitmann K."/>
            <person name="Hennig S."/>
            <person name="Hernandez J."/>
            <person name="Hinzmann B."/>
            <person name="Ho S."/>
            <person name="Hoffs M."/>
            <person name="Howden P.J."/>
            <person name="Huckle E.J."/>
            <person name="Hume J."/>
            <person name="Hunt P.J."/>
            <person name="Hunt A.R."/>
            <person name="Isherwood J."/>
            <person name="Jacob L."/>
            <person name="Johnson D."/>
            <person name="Jones S."/>
            <person name="de Jong P.J."/>
            <person name="Joseph S.S."/>
            <person name="Keenan S."/>
            <person name="Kelly S."/>
            <person name="Kershaw J.K."/>
            <person name="Khan Z."/>
            <person name="Kioschis P."/>
            <person name="Klages S."/>
            <person name="Knights A.J."/>
            <person name="Kosiura A."/>
            <person name="Kovar-Smith C."/>
            <person name="Laird G.K."/>
            <person name="Langford C."/>
            <person name="Lawlor S."/>
            <person name="Leversha M."/>
            <person name="Lewis L."/>
            <person name="Liu W."/>
            <person name="Lloyd C."/>
            <person name="Lloyd D.M."/>
            <person name="Loulseged H."/>
            <person name="Loveland J.E."/>
            <person name="Lovell J.D."/>
            <person name="Lozado R."/>
            <person name="Lu J."/>
            <person name="Lyne R."/>
            <person name="Ma J."/>
            <person name="Maheshwari M."/>
            <person name="Matthews L.H."/>
            <person name="McDowall J."/>
            <person name="McLaren S."/>
            <person name="McMurray A."/>
            <person name="Meidl P."/>
            <person name="Meitinger T."/>
            <person name="Milne S."/>
            <person name="Miner G."/>
            <person name="Mistry S.L."/>
            <person name="Morgan M."/>
            <person name="Morris S."/>
            <person name="Mueller I."/>
            <person name="Mullikin J.C."/>
            <person name="Nguyen N."/>
            <person name="Nordsiek G."/>
            <person name="Nyakatura G."/>
            <person name="O'dell C.N."/>
            <person name="Okwuonu G."/>
            <person name="Palmer S."/>
            <person name="Pandian R."/>
            <person name="Parker D."/>
            <person name="Parrish J."/>
            <person name="Pasternak S."/>
            <person name="Patel D."/>
            <person name="Pearce A.V."/>
            <person name="Pearson D.M."/>
            <person name="Pelan S.E."/>
            <person name="Perez L."/>
            <person name="Porter K.M."/>
            <person name="Ramsey Y."/>
            <person name="Reichwald K."/>
            <person name="Rhodes S."/>
            <person name="Ridler K.A."/>
            <person name="Schlessinger D."/>
            <person name="Schueler M.G."/>
            <person name="Sehra H.K."/>
            <person name="Shaw-Smith C."/>
            <person name="Shen H."/>
            <person name="Sheridan E.M."/>
            <person name="Shownkeen R."/>
            <person name="Skuce C.D."/>
            <person name="Smith M.L."/>
            <person name="Sotheran E.C."/>
            <person name="Steingruber H.E."/>
            <person name="Steward C.A."/>
            <person name="Storey R."/>
            <person name="Swann R.M."/>
            <person name="Swarbreck D."/>
            <person name="Tabor P.E."/>
            <person name="Taudien S."/>
            <person name="Taylor T."/>
            <person name="Teague B."/>
            <person name="Thomas K."/>
            <person name="Thorpe A."/>
            <person name="Timms K."/>
            <person name="Tracey A."/>
            <person name="Trevanion S."/>
            <person name="Tromans A.C."/>
            <person name="d'Urso M."/>
            <person name="Verduzco D."/>
            <person name="Villasana D."/>
            <person name="Waldron L."/>
            <person name="Wall M."/>
            <person name="Wang Q."/>
            <person name="Warren J."/>
            <person name="Warry G.L."/>
            <person name="Wei X."/>
            <person name="West A."/>
            <person name="Whitehead S.L."/>
            <person name="Whiteley M.N."/>
            <person name="Wilkinson J.E."/>
            <person name="Willey D.L."/>
            <person name="Williams G."/>
            <person name="Williams L."/>
            <person name="Williamson A."/>
            <person name="Williamson H."/>
            <person name="Wilming L."/>
            <person name="Woodmansey R.L."/>
            <person name="Wray P.W."/>
            <person name="Yen J."/>
            <person name="Zhang J."/>
            <person name="Zhou J."/>
            <person name="Zoghbi H."/>
            <person name="Zorilla S."/>
            <person name="Buck D."/>
            <person name="Reinhardt R."/>
            <person name="Poustka A."/>
            <person name="Rosenthal A."/>
            <person name="Lehrach H."/>
            <person name="Meindl A."/>
            <person name="Minx P.J."/>
            <person name="Hillier L.W."/>
            <person name="Willard H.F."/>
            <person name="Wilson R.K."/>
            <person name="Waterston R.H."/>
            <person name="Rice C.M."/>
            <person name="Vaudin M."/>
            <person name="Coulson A."/>
            <person name="Nelson D.L."/>
            <person name="Weinstock G."/>
            <person name="Sulston J.E."/>
            <person name="Durbin R.M."/>
            <person name="Hubbard T."/>
            <person name="Gibbs R.A."/>
            <person name="Beck S."/>
            <person name="Rogers J."/>
            <person name="Bentley D.R."/>
        </authorList>
    </citation>
    <scope>NUCLEOTIDE SEQUENCE [LARGE SCALE GENOMIC DNA]</scope>
</reference>
<reference key="2">
    <citation type="journal article" date="2004" name="Nat. Genet.">
        <title>Complete sequencing and characterization of 21,243 full-length human cDNAs.</title>
        <authorList>
            <person name="Ota T."/>
            <person name="Suzuki Y."/>
            <person name="Nishikawa T."/>
            <person name="Otsuki T."/>
            <person name="Sugiyama T."/>
            <person name="Irie R."/>
            <person name="Wakamatsu A."/>
            <person name="Hayashi K."/>
            <person name="Sato H."/>
            <person name="Nagai K."/>
            <person name="Kimura K."/>
            <person name="Makita H."/>
            <person name="Sekine M."/>
            <person name="Obayashi M."/>
            <person name="Nishi T."/>
            <person name="Shibahara T."/>
            <person name="Tanaka T."/>
            <person name="Ishii S."/>
            <person name="Yamamoto J."/>
            <person name="Saito K."/>
            <person name="Kawai Y."/>
            <person name="Isono Y."/>
            <person name="Nakamura Y."/>
            <person name="Nagahari K."/>
            <person name="Murakami K."/>
            <person name="Yasuda T."/>
            <person name="Iwayanagi T."/>
            <person name="Wagatsuma M."/>
            <person name="Shiratori A."/>
            <person name="Sudo H."/>
            <person name="Hosoiri T."/>
            <person name="Kaku Y."/>
            <person name="Kodaira H."/>
            <person name="Kondo H."/>
            <person name="Sugawara M."/>
            <person name="Takahashi M."/>
            <person name="Kanda K."/>
            <person name="Yokoi T."/>
            <person name="Furuya T."/>
            <person name="Kikkawa E."/>
            <person name="Omura Y."/>
            <person name="Abe K."/>
            <person name="Kamihara K."/>
            <person name="Katsuta N."/>
            <person name="Sato K."/>
            <person name="Tanikawa M."/>
            <person name="Yamazaki M."/>
            <person name="Ninomiya K."/>
            <person name="Ishibashi T."/>
            <person name="Yamashita H."/>
            <person name="Murakawa K."/>
            <person name="Fujimori K."/>
            <person name="Tanai H."/>
            <person name="Kimata M."/>
            <person name="Watanabe M."/>
            <person name="Hiraoka S."/>
            <person name="Chiba Y."/>
            <person name="Ishida S."/>
            <person name="Ono Y."/>
            <person name="Takiguchi S."/>
            <person name="Watanabe S."/>
            <person name="Yosida M."/>
            <person name="Hotuta T."/>
            <person name="Kusano J."/>
            <person name="Kanehori K."/>
            <person name="Takahashi-Fujii A."/>
            <person name="Hara H."/>
            <person name="Tanase T.-O."/>
            <person name="Nomura Y."/>
            <person name="Togiya S."/>
            <person name="Komai F."/>
            <person name="Hara R."/>
            <person name="Takeuchi K."/>
            <person name="Arita M."/>
            <person name="Imose N."/>
            <person name="Musashino K."/>
            <person name="Yuuki H."/>
            <person name="Oshima A."/>
            <person name="Sasaki N."/>
            <person name="Aotsuka S."/>
            <person name="Yoshikawa Y."/>
            <person name="Matsunawa H."/>
            <person name="Ichihara T."/>
            <person name="Shiohata N."/>
            <person name="Sano S."/>
            <person name="Moriya S."/>
            <person name="Momiyama H."/>
            <person name="Satoh N."/>
            <person name="Takami S."/>
            <person name="Terashima Y."/>
            <person name="Suzuki O."/>
            <person name="Nakagawa S."/>
            <person name="Senoh A."/>
            <person name="Mizoguchi H."/>
            <person name="Goto Y."/>
            <person name="Shimizu F."/>
            <person name="Wakebe H."/>
            <person name="Hishigaki H."/>
            <person name="Watanabe T."/>
            <person name="Sugiyama A."/>
            <person name="Takemoto M."/>
            <person name="Kawakami B."/>
            <person name="Yamazaki M."/>
            <person name="Watanabe K."/>
            <person name="Kumagai A."/>
            <person name="Itakura S."/>
            <person name="Fukuzumi Y."/>
            <person name="Fujimori Y."/>
            <person name="Komiyama M."/>
            <person name="Tashiro H."/>
            <person name="Tanigami A."/>
            <person name="Fujiwara T."/>
            <person name="Ono T."/>
            <person name="Yamada K."/>
            <person name="Fujii Y."/>
            <person name="Ozaki K."/>
            <person name="Hirao M."/>
            <person name="Ohmori Y."/>
            <person name="Kawabata A."/>
            <person name="Hikiji T."/>
            <person name="Kobatake N."/>
            <person name="Inagaki H."/>
            <person name="Ikema Y."/>
            <person name="Okamoto S."/>
            <person name="Okitani R."/>
            <person name="Kawakami T."/>
            <person name="Noguchi S."/>
            <person name="Itoh T."/>
            <person name="Shigeta K."/>
            <person name="Senba T."/>
            <person name="Matsumura K."/>
            <person name="Nakajima Y."/>
            <person name="Mizuno T."/>
            <person name="Morinaga M."/>
            <person name="Sasaki M."/>
            <person name="Togashi T."/>
            <person name="Oyama M."/>
            <person name="Hata H."/>
            <person name="Watanabe M."/>
            <person name="Komatsu T."/>
            <person name="Mizushima-Sugano J."/>
            <person name="Satoh T."/>
            <person name="Shirai Y."/>
            <person name="Takahashi Y."/>
            <person name="Nakagawa K."/>
            <person name="Okumura K."/>
            <person name="Nagase T."/>
            <person name="Nomura N."/>
            <person name="Kikuchi H."/>
            <person name="Masuho Y."/>
            <person name="Yamashita R."/>
            <person name="Nakai K."/>
            <person name="Yada T."/>
            <person name="Nakamura Y."/>
            <person name="Ohara O."/>
            <person name="Isogai T."/>
            <person name="Sugano S."/>
        </authorList>
    </citation>
    <scope>NUCLEOTIDE SEQUENCE [LARGE SCALE MRNA] OF 129-711 (ISOFORM 1)</scope>
    <scope>NUCLEOTIDE SEQUENCE [LARGE SCALE MRNA] OF 393-711 (ISOFORM 3)</scope>
    <source>
        <tissue>Amygdala</tissue>
        <tissue>Teratocarcinoma</tissue>
    </source>
</reference>
<reference key="3">
    <citation type="journal article" date="2004" name="Genome Res.">
        <title>The status, quality, and expansion of the NIH full-length cDNA project: the Mammalian Gene Collection (MGC).</title>
        <authorList>
            <consortium name="The MGC Project Team"/>
        </authorList>
    </citation>
    <scope>NUCLEOTIDE SEQUENCE [LARGE SCALE MRNA] OF 290-711 (ISOFORM 2)</scope>
    <source>
        <tissue>Colon</tissue>
    </source>
</reference>
<reference key="4">
    <citation type="journal article" date="2008" name="Proc. Natl. Acad. Sci. U.S.A.">
        <title>A quantitative atlas of mitotic phosphorylation.</title>
        <authorList>
            <person name="Dephoure N."/>
            <person name="Zhou C."/>
            <person name="Villen J."/>
            <person name="Beausoleil S.A."/>
            <person name="Bakalarski C.E."/>
            <person name="Elledge S.J."/>
            <person name="Gygi S.P."/>
        </authorList>
    </citation>
    <scope>PHOSPHORYLATION [LARGE SCALE ANALYSIS] AT SER-78 AND SER-80</scope>
    <scope>IDENTIFICATION BY MASS SPECTROMETRY [LARGE SCALE ANALYSIS]</scope>
    <source>
        <tissue>Cervix carcinoma</tissue>
    </source>
</reference>
<reference key="5">
    <citation type="journal article" date="2011" name="Sci. Signal.">
        <title>System-wide temporal characterization of the proteome and phosphoproteome of human embryonic stem cell differentiation.</title>
        <authorList>
            <person name="Rigbolt K.T."/>
            <person name="Prokhorova T.A."/>
            <person name="Akimov V."/>
            <person name="Henningsen J."/>
            <person name="Johansen P.T."/>
            <person name="Kratchmarova I."/>
            <person name="Kassem M."/>
            <person name="Mann M."/>
            <person name="Olsen J.V."/>
            <person name="Blagoev B."/>
        </authorList>
    </citation>
    <scope>PHOSPHORYLATION [LARGE SCALE ANALYSIS] AT SER-15 AND SER-17</scope>
    <scope>IDENTIFICATION BY MASS SPECTROMETRY [LARGE SCALE ANALYSIS]</scope>
</reference>
<reference key="6">
    <citation type="journal article" date="2013" name="J. Proteome Res.">
        <title>Toward a comprehensive characterization of a human cancer cell phosphoproteome.</title>
        <authorList>
            <person name="Zhou H."/>
            <person name="Di Palma S."/>
            <person name="Preisinger C."/>
            <person name="Peng M."/>
            <person name="Polat A.N."/>
            <person name="Heck A.J."/>
            <person name="Mohammed S."/>
        </authorList>
    </citation>
    <scope>PHOSPHORYLATION [LARGE SCALE ANALYSIS] AT SER-402</scope>
    <scope>IDENTIFICATION BY MASS SPECTROMETRY [LARGE SCALE ANALYSIS]</scope>
    <source>
        <tissue>Cervix carcinoma</tissue>
        <tissue>Erythroleukemia</tissue>
    </source>
</reference>
<reference key="7">
    <citation type="journal article" date="2017" name="Nat. Struct. Mol. Biol.">
        <title>Site-specific mapping of the human SUMO proteome reveals co-modification with phosphorylation.</title>
        <authorList>
            <person name="Hendriks I.A."/>
            <person name="Lyon D."/>
            <person name="Young C."/>
            <person name="Jensen L.J."/>
            <person name="Vertegaal A.C."/>
            <person name="Nielsen M.L."/>
        </authorList>
    </citation>
    <scope>SUMOYLATION [LARGE SCALE ANALYSIS] AT LYS-400</scope>
    <scope>IDENTIFICATION BY MASS SPECTROMETRY [LARGE SCALE ANALYSIS]</scope>
</reference>
<comment type="subcellular location">
    <subcellularLocation>
        <location evidence="5">Mitochondrion</location>
    </subcellularLocation>
</comment>
<comment type="alternative products">
    <event type="alternative splicing"/>
    <isoform>
        <id>A2AJT9-1</id>
        <name>1</name>
        <sequence type="displayed"/>
    </isoform>
    <isoform>
        <id>A2AJT9-2</id>
        <name>2</name>
        <sequence type="described" ref="VSP_025459"/>
    </isoform>
    <isoform>
        <id>A2AJT9-3</id>
        <name>3</name>
        <sequence type="described" ref="VSP_025458"/>
    </isoform>
</comment>
<comment type="similarity">
    <text evidence="5">Belongs to the BCLAF1/THRAP3 family.</text>
</comment>
<comment type="sequence caution" evidence="5">
    <conflict type="erroneous initiation">
        <sequence resource="EMBL-CDS" id="BAC04399"/>
    </conflict>
</comment>
<comment type="sequence caution" evidence="5">
    <conflict type="erroneous initiation">
        <sequence resource="EMBL-CDS" id="BAC87094"/>
    </conflict>
</comment>
<protein>
    <recommendedName>
        <fullName evidence="6">BCLAF1 and THRAP3 family member 3</fullName>
    </recommendedName>
</protein>
<sequence length="711" mass="83871">MARSRSRSPRWKHRSLSPVPRNAEHYKQRHSHGHYGCEYRKDPKRPVAWRMDSEKHGQSKPRIPSRGNIYYQSYEHRSPSPNIRNSLENVYMYKPHRGYSPGRGDSNRRAQYMPKYSEGIPYKEHERNSYPQKVQGGHSPDDHRVRGSGKGGKPPQRSIADSFRFEGKWHEDELRHQRIQEEKYSQSTRRGSEDFETRSSFQKRYPEDRDFRKYGHTSKRPKDVERYESREPARNPKWKPEHSLPPYQEDTDQWNLGPQTYRHAEREHPETSSATKVSYDYRHKRPKLLDGDQDFSDGRTQKYCKEEDRKYSFQKGPLNRELDCFNTGRGRETQDGQVKEPFKPSKKDSIACTYSNKNDVDLRSSNDKWKEKIKKEGDCRKESNSSSNQLDKSQKLPDVKPSPINLRKKSLTVKVDVKKTVDTFRVASSYSTERQMSHDLVAVGRKSENFHPVFEHLDSTQNTENKPTGEFAQEIITIIHQVKANYFPSPGITLHERFSTMQDIHKADVNEIPLNSDPEIHRRIDMSLAELQSKQAVIYESEQTLIKIIDPNDLRHDIERRRKERLQNEDEHIFHIASAAERDDQNSSFSKVKNVHTDGFQKPTHFIKSNFRKCIEKPYMNYTTQRKDIITHKPFEVEGNHRNTRVRPFKSNFRGGRCQPNYKSGLVQKSLYIQAKYQRLRFTGPRGFITHKFRERLMRKKKEYTDVATGI</sequence>
<feature type="chain" id="PRO_0000287434" description="BCLAF1 and THRAP3 family member 3">
    <location>
        <begin position="1"/>
        <end position="711"/>
    </location>
</feature>
<feature type="region of interest" description="Disordered" evidence="2">
    <location>
        <begin position="1"/>
        <end position="42"/>
    </location>
</feature>
<feature type="region of interest" description="Disordered" evidence="2">
    <location>
        <begin position="48"/>
        <end position="67"/>
    </location>
</feature>
<feature type="region of interest" description="Disordered" evidence="2">
    <location>
        <begin position="94"/>
        <end position="350"/>
    </location>
</feature>
<feature type="region of interest" description="Disordered" evidence="2">
    <location>
        <begin position="371"/>
        <end position="404"/>
    </location>
</feature>
<feature type="compositionally biased region" description="Basic residues" evidence="2">
    <location>
        <begin position="1"/>
        <end position="15"/>
    </location>
</feature>
<feature type="compositionally biased region" description="Basic and acidic residues" evidence="2">
    <location>
        <begin position="48"/>
        <end position="57"/>
    </location>
</feature>
<feature type="compositionally biased region" description="Basic and acidic residues" evidence="2">
    <location>
        <begin position="163"/>
        <end position="197"/>
    </location>
</feature>
<feature type="compositionally biased region" description="Basic and acidic residues" evidence="2">
    <location>
        <begin position="204"/>
        <end position="213"/>
    </location>
</feature>
<feature type="compositionally biased region" description="Basic and acidic residues" evidence="2">
    <location>
        <begin position="220"/>
        <end position="242"/>
    </location>
</feature>
<feature type="compositionally biased region" description="Basic and acidic residues" evidence="2">
    <location>
        <begin position="296"/>
        <end position="311"/>
    </location>
</feature>
<feature type="compositionally biased region" description="Basic and acidic residues" evidence="2">
    <location>
        <begin position="318"/>
        <end position="349"/>
    </location>
</feature>
<feature type="compositionally biased region" description="Basic and acidic residues" evidence="2">
    <location>
        <begin position="371"/>
        <end position="383"/>
    </location>
</feature>
<feature type="modified residue" description="Phosphoserine" evidence="8">
    <location>
        <position position="15"/>
    </location>
</feature>
<feature type="modified residue" description="Phosphoserine" evidence="8">
    <location>
        <position position="17"/>
    </location>
</feature>
<feature type="modified residue" description="Phosphoserine" evidence="7">
    <location>
        <position position="78"/>
    </location>
</feature>
<feature type="modified residue" description="Phosphoserine" evidence="7">
    <location>
        <position position="80"/>
    </location>
</feature>
<feature type="modified residue" description="Phosphoserine" evidence="1">
    <location>
        <position position="187"/>
    </location>
</feature>
<feature type="modified residue" description="Phosphoserine" evidence="9">
    <location>
        <position position="402"/>
    </location>
</feature>
<feature type="modified residue" description="Phosphoserine" evidence="1">
    <location>
        <position position="578"/>
    </location>
</feature>
<feature type="cross-link" description="Glycyl lysine isopeptide (Lys-Gly) (interchain with G-Cter in SUMO2)" evidence="10">
    <location>
        <position position="400"/>
    </location>
</feature>
<feature type="splice variant" id="VSP_025458" description="In isoform 3." evidence="3">
    <original>VKNVHTDGFQKPTHFIKSNFRKCIEKPYMNYTTQRKDIITHKPFEVEGNHRNTRVRPFKSNFRGGRCQPNYKSGLVQKSLYIQAKYQRLRFTGPRGFITHKFRERLMRKKKEYTDVATGI</original>
    <variation>GLALSPRLECGVTITAYCSLYLQDSSYLPPQPPE</variation>
    <location>
        <begin position="592"/>
        <end position="711"/>
    </location>
</feature>
<feature type="splice variant" id="VSP_025459" description="In isoform 2." evidence="4">
    <location>
        <begin position="592"/>
        <end position="620"/>
    </location>
</feature>
<feature type="sequence conflict" description="In Ref. 2; BAC04399." evidence="5" ref="2">
    <original>S</original>
    <variation>G</variation>
    <location sequence="A2AJT9-3">
        <position position="617"/>
    </location>
</feature>
<feature type="sequence conflict" description="In Ref. 2; BAC04399." evidence="5" ref="2">
    <original>Q</original>
    <variation>R</variation>
    <location sequence="A2AJT9-3">
        <position position="622"/>
    </location>
</feature>
<organism>
    <name type="scientific">Homo sapiens</name>
    <name type="common">Human</name>
    <dbReference type="NCBI Taxonomy" id="9606"/>
    <lineage>
        <taxon>Eukaryota</taxon>
        <taxon>Metazoa</taxon>
        <taxon>Chordata</taxon>
        <taxon>Craniata</taxon>
        <taxon>Vertebrata</taxon>
        <taxon>Euteleostomi</taxon>
        <taxon>Mammalia</taxon>
        <taxon>Eutheria</taxon>
        <taxon>Euarchontoglires</taxon>
        <taxon>Primates</taxon>
        <taxon>Haplorrhini</taxon>
        <taxon>Catarrhini</taxon>
        <taxon>Hominidae</taxon>
        <taxon>Homo</taxon>
    </lineage>
</organism>